<name>KARG_SCHAM</name>
<proteinExistence type="evidence at transcript level"/>
<comment type="catalytic activity">
    <reaction>
        <text>L-arginine + ATP = N(omega)-phospho-L-arginine + ADP + H(+)</text>
        <dbReference type="Rhea" id="RHEA:22940"/>
        <dbReference type="ChEBI" id="CHEBI:15378"/>
        <dbReference type="ChEBI" id="CHEBI:30616"/>
        <dbReference type="ChEBI" id="CHEBI:32682"/>
        <dbReference type="ChEBI" id="CHEBI:58477"/>
        <dbReference type="ChEBI" id="CHEBI:456216"/>
        <dbReference type="EC" id="2.7.3.3"/>
    </reaction>
</comment>
<comment type="similarity">
    <text evidence="2 3">Belongs to the ATP:guanido phosphotransferase family.</text>
</comment>
<organism>
    <name type="scientific">Schistocerca americana</name>
    <name type="common">American grasshopper</name>
    <dbReference type="NCBI Taxonomy" id="7009"/>
    <lineage>
        <taxon>Eukaryota</taxon>
        <taxon>Metazoa</taxon>
        <taxon>Ecdysozoa</taxon>
        <taxon>Arthropoda</taxon>
        <taxon>Hexapoda</taxon>
        <taxon>Insecta</taxon>
        <taxon>Pterygota</taxon>
        <taxon>Neoptera</taxon>
        <taxon>Polyneoptera</taxon>
        <taxon>Orthoptera</taxon>
        <taxon>Caelifera</taxon>
        <taxon>Acrididea</taxon>
        <taxon>Acridomorpha</taxon>
        <taxon>Acridoidea</taxon>
        <taxon>Acrididae</taxon>
        <taxon>Cyrtacanthacridinae</taxon>
        <taxon>Schistocerca</taxon>
    </lineage>
</organism>
<accession>P91798</accession>
<feature type="chain" id="PRO_0000211994" description="Arginine kinase">
    <location>
        <begin position="1"/>
        <end position="356"/>
    </location>
</feature>
<feature type="domain" description="Phosphagen kinase N-terminal" evidence="2">
    <location>
        <begin position="8"/>
        <end position="91"/>
    </location>
</feature>
<feature type="domain" description="Phosphagen kinase C-terminal" evidence="3">
    <location>
        <begin position="119"/>
        <end position="356"/>
    </location>
</feature>
<feature type="binding site" evidence="1">
    <location>
        <begin position="64"/>
        <end position="68"/>
    </location>
    <ligand>
        <name>substrate</name>
    </ligand>
</feature>
<feature type="binding site" evidence="3">
    <location>
        <begin position="122"/>
        <end position="126"/>
    </location>
    <ligand>
        <name>ATP</name>
        <dbReference type="ChEBI" id="CHEBI:30616"/>
    </ligand>
</feature>
<feature type="binding site" evidence="3">
    <location>
        <position position="185"/>
    </location>
    <ligand>
        <name>ATP</name>
        <dbReference type="ChEBI" id="CHEBI:30616"/>
    </ligand>
</feature>
<feature type="binding site" evidence="1">
    <location>
        <position position="225"/>
    </location>
    <ligand>
        <name>substrate</name>
    </ligand>
</feature>
<feature type="binding site" evidence="3">
    <location>
        <position position="229"/>
    </location>
    <ligand>
        <name>ATP</name>
        <dbReference type="ChEBI" id="CHEBI:30616"/>
    </ligand>
</feature>
<feature type="binding site" evidence="1">
    <location>
        <position position="271"/>
    </location>
    <ligand>
        <name>substrate</name>
    </ligand>
</feature>
<feature type="binding site" evidence="3">
    <location>
        <begin position="280"/>
        <end position="284"/>
    </location>
    <ligand>
        <name>ATP</name>
        <dbReference type="ChEBI" id="CHEBI:30616"/>
    </ligand>
</feature>
<feature type="binding site" evidence="3">
    <location>
        <begin position="309"/>
        <end position="314"/>
    </location>
    <ligand>
        <name>ATP</name>
        <dbReference type="ChEBI" id="CHEBI:30616"/>
    </ligand>
</feature>
<feature type="binding site" evidence="1">
    <location>
        <position position="314"/>
    </location>
    <ligand>
        <name>substrate</name>
    </ligand>
</feature>
<gene>
    <name type="primary">ARGK</name>
</gene>
<keyword id="KW-0067">ATP-binding</keyword>
<keyword id="KW-0418">Kinase</keyword>
<keyword id="KW-0547">Nucleotide-binding</keyword>
<keyword id="KW-0808">Transferase</keyword>
<reference key="1">
    <citation type="submission" date="1996-12" db="EMBL/GenBank/DDBJ databases">
        <authorList>
            <person name="Wang Y.M.E."/>
            <person name="Esbensen P."/>
            <person name="Bentley D."/>
        </authorList>
    </citation>
    <scope>NUCLEOTIDE SEQUENCE [MRNA]</scope>
</reference>
<evidence type="ECO:0000250" key="1"/>
<evidence type="ECO:0000255" key="2">
    <source>
        <dbReference type="PROSITE-ProRule" id="PRU00842"/>
    </source>
</evidence>
<evidence type="ECO:0000255" key="3">
    <source>
        <dbReference type="PROSITE-ProRule" id="PRU00843"/>
    </source>
</evidence>
<dbReference type="EC" id="2.7.3.3"/>
<dbReference type="EMBL" id="U77580">
    <property type="protein sequence ID" value="AAC47830.1"/>
    <property type="molecule type" value="mRNA"/>
</dbReference>
<dbReference type="SMR" id="P91798"/>
<dbReference type="OrthoDB" id="430219at2759"/>
<dbReference type="GO" id="GO:0005615">
    <property type="term" value="C:extracellular space"/>
    <property type="evidence" value="ECO:0007669"/>
    <property type="project" value="TreeGrafter"/>
</dbReference>
<dbReference type="GO" id="GO:0004054">
    <property type="term" value="F:arginine kinase activity"/>
    <property type="evidence" value="ECO:0007669"/>
    <property type="project" value="UniProtKB-EC"/>
</dbReference>
<dbReference type="GO" id="GO:0005524">
    <property type="term" value="F:ATP binding"/>
    <property type="evidence" value="ECO:0007669"/>
    <property type="project" value="UniProtKB-KW"/>
</dbReference>
<dbReference type="GO" id="GO:0004111">
    <property type="term" value="F:creatine kinase activity"/>
    <property type="evidence" value="ECO:0007669"/>
    <property type="project" value="InterPro"/>
</dbReference>
<dbReference type="GO" id="GO:0046314">
    <property type="term" value="P:phosphocreatine biosynthetic process"/>
    <property type="evidence" value="ECO:0007669"/>
    <property type="project" value="InterPro"/>
</dbReference>
<dbReference type="CDD" id="cd07932">
    <property type="entry name" value="arginine_kinase_like"/>
    <property type="match status" value="1"/>
</dbReference>
<dbReference type="FunFam" id="3.30.590.10:FF:000006">
    <property type="entry name" value="Arginine kinase 1"/>
    <property type="match status" value="1"/>
</dbReference>
<dbReference type="FunFam" id="1.10.135.10:FF:000003">
    <property type="entry name" value="Three-domain arginine kinase"/>
    <property type="match status" value="1"/>
</dbReference>
<dbReference type="Gene3D" id="1.10.135.10">
    <property type="entry name" value="ATP:guanido phosphotransferase, N-terminal domain"/>
    <property type="match status" value="1"/>
</dbReference>
<dbReference type="Gene3D" id="3.30.590.10">
    <property type="entry name" value="Glutamine synthetase/guanido kinase, catalytic domain"/>
    <property type="match status" value="1"/>
</dbReference>
<dbReference type="InterPro" id="IPR000749">
    <property type="entry name" value="ATP-guanido_PTrfase"/>
</dbReference>
<dbReference type="InterPro" id="IPR022415">
    <property type="entry name" value="ATP-guanido_PTrfase_AS"/>
</dbReference>
<dbReference type="InterPro" id="IPR022414">
    <property type="entry name" value="ATP-guanido_PTrfase_cat"/>
</dbReference>
<dbReference type="InterPro" id="IPR022413">
    <property type="entry name" value="ATP-guanido_PTrfase_N"/>
</dbReference>
<dbReference type="InterPro" id="IPR036802">
    <property type="entry name" value="ATP-guanido_PTrfase_N_sf"/>
</dbReference>
<dbReference type="InterPro" id="IPR014746">
    <property type="entry name" value="Gln_synth/guanido_kin_cat_dom"/>
</dbReference>
<dbReference type="PANTHER" id="PTHR11547:SF38">
    <property type="entry name" value="ARGININE KINASE 1-RELATED"/>
    <property type="match status" value="1"/>
</dbReference>
<dbReference type="PANTHER" id="PTHR11547">
    <property type="entry name" value="ARGININE OR CREATINE KINASE"/>
    <property type="match status" value="1"/>
</dbReference>
<dbReference type="Pfam" id="PF00217">
    <property type="entry name" value="ATP-gua_Ptrans"/>
    <property type="match status" value="1"/>
</dbReference>
<dbReference type="Pfam" id="PF02807">
    <property type="entry name" value="ATP-gua_PtransN"/>
    <property type="match status" value="1"/>
</dbReference>
<dbReference type="SUPFAM" id="SSF55931">
    <property type="entry name" value="Glutamine synthetase/guanido kinase"/>
    <property type="match status" value="1"/>
</dbReference>
<dbReference type="SUPFAM" id="SSF48034">
    <property type="entry name" value="Guanido kinase N-terminal domain"/>
    <property type="match status" value="1"/>
</dbReference>
<dbReference type="PROSITE" id="PS00112">
    <property type="entry name" value="PHOSPHAGEN_KINASE"/>
    <property type="match status" value="1"/>
</dbReference>
<dbReference type="PROSITE" id="PS51510">
    <property type="entry name" value="PHOSPHAGEN_KINASE_C"/>
    <property type="match status" value="1"/>
</dbReference>
<dbReference type="PROSITE" id="PS51509">
    <property type="entry name" value="PHOSPHAGEN_KINASE_N"/>
    <property type="match status" value="1"/>
</dbReference>
<protein>
    <recommendedName>
        <fullName>Arginine kinase</fullName>
        <shortName>AK</shortName>
        <ecNumber>2.7.3.3</ecNumber>
    </recommendedName>
</protein>
<sequence length="356" mass="40016">MVDAAVLEKLEAGFKKLEASDSKSLLKKYLTREVFDKLKTKKTPSFGSTLLDCIQSGLENHDSGVGIYAPDAEAYTVFADLFDPIIEDYHGGFKKTDKHPPKNFGDVDTLANLDPNGEYVISTRVRCGRSMQGYPFNPCLTEAQYKEMEQKVSTTLSSLEGELKGQFYPLTGMSKEVQQKLIDDHFLFKEGDRFLQAANACRFWPSGRGIYHNDNKTFLVWCNEEDHLRIISMQPGGDLGQVYRRLVHAVNEIEKRIPFSHDDRLGFLTFCPTNLGTTLRASVHIKLPKLAADRTKLEEVAGKFNLQVRGSTGEHTEAEGGVYDISNKRRMGLTEYDAVKEMNDGILELIKIEGSL</sequence>